<protein>
    <recommendedName>
        <fullName>Flagella basal body P-ring formation protein FlgA</fullName>
    </recommendedName>
</protein>
<evidence type="ECO:0000250" key="1"/>
<evidence type="ECO:0000255" key="2"/>
<evidence type="ECO:0000305" key="3"/>
<dbReference type="EMBL" id="AE013218">
    <property type="protein sequence ID" value="AAM67878.1"/>
    <property type="molecule type" value="Genomic_DNA"/>
</dbReference>
<dbReference type="RefSeq" id="WP_011053845.1">
    <property type="nucleotide sequence ID" value="NC_004061.1"/>
</dbReference>
<dbReference type="SMR" id="Q8K9L0"/>
<dbReference type="STRING" id="198804.BUsg_324"/>
<dbReference type="GeneID" id="93003795"/>
<dbReference type="KEGG" id="bas:BUsg_324"/>
<dbReference type="eggNOG" id="COG1261">
    <property type="taxonomic scope" value="Bacteria"/>
</dbReference>
<dbReference type="HOGENOM" id="CLU_070510_2_0_6"/>
<dbReference type="Proteomes" id="UP000000416">
    <property type="component" value="Chromosome"/>
</dbReference>
<dbReference type="GO" id="GO:0042597">
    <property type="term" value="C:periplasmic space"/>
    <property type="evidence" value="ECO:0007669"/>
    <property type="project" value="UniProtKB-SubCell"/>
</dbReference>
<dbReference type="GO" id="GO:0044780">
    <property type="term" value="P:bacterial-type flagellum assembly"/>
    <property type="evidence" value="ECO:0007669"/>
    <property type="project" value="InterPro"/>
</dbReference>
<dbReference type="CDD" id="cd11614">
    <property type="entry name" value="SAF_CpaB_FlgA_like"/>
    <property type="match status" value="1"/>
</dbReference>
<dbReference type="Gene3D" id="2.30.30.760">
    <property type="match status" value="1"/>
</dbReference>
<dbReference type="InterPro" id="IPR017585">
    <property type="entry name" value="Flag_basal_body_FlgA_C"/>
</dbReference>
<dbReference type="InterPro" id="IPR039246">
    <property type="entry name" value="Flagellar_FlgA"/>
</dbReference>
<dbReference type="InterPro" id="IPR013974">
    <property type="entry name" value="SAF"/>
</dbReference>
<dbReference type="NCBIfam" id="TIGR03170">
    <property type="entry name" value="flgA_cterm"/>
    <property type="match status" value="1"/>
</dbReference>
<dbReference type="PANTHER" id="PTHR36307">
    <property type="entry name" value="FLAGELLA BASAL BODY P-RING FORMATION PROTEIN FLGA"/>
    <property type="match status" value="1"/>
</dbReference>
<dbReference type="PANTHER" id="PTHR36307:SF1">
    <property type="entry name" value="FLAGELLA BASAL BODY P-RING FORMATION PROTEIN FLGA"/>
    <property type="match status" value="1"/>
</dbReference>
<dbReference type="Pfam" id="PF13144">
    <property type="entry name" value="ChapFlgA"/>
    <property type="match status" value="1"/>
</dbReference>
<dbReference type="SMART" id="SM00858">
    <property type="entry name" value="SAF"/>
    <property type="match status" value="1"/>
</dbReference>
<proteinExistence type="inferred from homology"/>
<sequence>MKLIKIFFCLFIFFLFFKSFKATAYNLSDQLNNFFKKEYSLKTKNIKTIIHTPLKKNFFCKKPVFSLVNNLHNFGIIDIILICGSQHKYLQVELQAEGEYVIAKKKILRGTKIRGDDLIKVVGRLDTLPRGAYLNEKDLINRVNLRDIFPFQPITSFMTRPYWLVKMNQLVTVKMKGVDFEVIFVGKSLSNGAERQKIRVQLKNGKVLTGVINNNSEVIVFL</sequence>
<keyword id="KW-1005">Bacterial flagellum biogenesis</keyword>
<keyword id="KW-0574">Periplasm</keyword>
<keyword id="KW-0732">Signal</keyword>
<comment type="function">
    <text evidence="1">Involved in the assembly process of the P-ring formation. It may associate with FlgF on the rod constituting a structure essential for the P-ring assembly or may act as a modulator protein for the P-ring assembly (By similarity).</text>
</comment>
<comment type="subcellular location">
    <subcellularLocation>
        <location evidence="3">Periplasm</location>
    </subcellularLocation>
</comment>
<comment type="similarity">
    <text evidence="3">Belongs to the FlgA family.</text>
</comment>
<name>FLGA_BUCAP</name>
<reference key="1">
    <citation type="journal article" date="2002" name="Science">
        <title>50 million years of genomic stasis in endosymbiotic bacteria.</title>
        <authorList>
            <person name="Tamas I."/>
            <person name="Klasson L."/>
            <person name="Canbaeck B."/>
            <person name="Naeslund A.K."/>
            <person name="Eriksson A.-S."/>
            <person name="Wernegreen J.J."/>
            <person name="Sandstroem J.P."/>
            <person name="Moran N.A."/>
            <person name="Andersson S.G.E."/>
        </authorList>
    </citation>
    <scope>NUCLEOTIDE SEQUENCE [LARGE SCALE GENOMIC DNA]</scope>
    <source>
        <strain>Sg</strain>
    </source>
</reference>
<organism>
    <name type="scientific">Buchnera aphidicola subsp. Schizaphis graminum (strain Sg)</name>
    <dbReference type="NCBI Taxonomy" id="198804"/>
    <lineage>
        <taxon>Bacteria</taxon>
        <taxon>Pseudomonadati</taxon>
        <taxon>Pseudomonadota</taxon>
        <taxon>Gammaproteobacteria</taxon>
        <taxon>Enterobacterales</taxon>
        <taxon>Erwiniaceae</taxon>
        <taxon>Buchnera</taxon>
    </lineage>
</organism>
<feature type="signal peptide" evidence="2">
    <location>
        <begin position="1"/>
        <end position="24"/>
    </location>
</feature>
<feature type="chain" id="PRO_0000009340" description="Flagella basal body P-ring formation protein FlgA">
    <location>
        <begin position="25"/>
        <end position="222"/>
    </location>
</feature>
<accession>Q8K9L0</accession>
<gene>
    <name type="primary">flgA</name>
    <name type="ordered locus">BUsg_324</name>
</gene>